<keyword id="KW-0067">ATP-binding</keyword>
<keyword id="KW-0963">Cytoplasm</keyword>
<keyword id="KW-1015">Disulfide bond</keyword>
<keyword id="KW-0547">Nucleotide-binding</keyword>
<keyword id="KW-0694">RNA-binding</keyword>
<keyword id="KW-0808">Transferase</keyword>
<keyword id="KW-0819">tRNA processing</keyword>
<keyword id="KW-0820">tRNA-binding</keyword>
<dbReference type="EC" id="2.8.1.13" evidence="1"/>
<dbReference type="EMBL" id="CP000485">
    <property type="protein sequence ID" value="ABK87198.1"/>
    <property type="status" value="ALT_INIT"/>
    <property type="molecule type" value="Genomic_DNA"/>
</dbReference>
<dbReference type="RefSeq" id="WP_001038006.1">
    <property type="nucleotide sequence ID" value="NC_008600.1"/>
</dbReference>
<dbReference type="SMR" id="A0RJ05"/>
<dbReference type="GeneID" id="93006705"/>
<dbReference type="KEGG" id="btl:BALH_3978"/>
<dbReference type="HOGENOM" id="CLU_035188_1_0_9"/>
<dbReference type="GO" id="GO:0005737">
    <property type="term" value="C:cytoplasm"/>
    <property type="evidence" value="ECO:0007669"/>
    <property type="project" value="UniProtKB-SubCell"/>
</dbReference>
<dbReference type="GO" id="GO:0005524">
    <property type="term" value="F:ATP binding"/>
    <property type="evidence" value="ECO:0007669"/>
    <property type="project" value="UniProtKB-KW"/>
</dbReference>
<dbReference type="GO" id="GO:0000049">
    <property type="term" value="F:tRNA binding"/>
    <property type="evidence" value="ECO:0007669"/>
    <property type="project" value="UniProtKB-KW"/>
</dbReference>
<dbReference type="GO" id="GO:0103016">
    <property type="term" value="F:tRNA-uridine 2-sulfurtransferase activity"/>
    <property type="evidence" value="ECO:0007669"/>
    <property type="project" value="UniProtKB-EC"/>
</dbReference>
<dbReference type="GO" id="GO:0002143">
    <property type="term" value="P:tRNA wobble position uridine thiolation"/>
    <property type="evidence" value="ECO:0007669"/>
    <property type="project" value="TreeGrafter"/>
</dbReference>
<dbReference type="CDD" id="cd01998">
    <property type="entry name" value="MnmA_TRMU-like"/>
    <property type="match status" value="1"/>
</dbReference>
<dbReference type="FunFam" id="2.30.30.280:FF:000001">
    <property type="entry name" value="tRNA-specific 2-thiouridylase MnmA"/>
    <property type="match status" value="1"/>
</dbReference>
<dbReference type="FunFam" id="2.40.30.10:FF:000023">
    <property type="entry name" value="tRNA-specific 2-thiouridylase MnmA"/>
    <property type="match status" value="1"/>
</dbReference>
<dbReference type="FunFam" id="3.40.50.620:FF:000004">
    <property type="entry name" value="tRNA-specific 2-thiouridylase MnmA"/>
    <property type="match status" value="1"/>
</dbReference>
<dbReference type="Gene3D" id="2.30.30.280">
    <property type="entry name" value="Adenine nucleotide alpha hydrolases-like domains"/>
    <property type="match status" value="1"/>
</dbReference>
<dbReference type="Gene3D" id="3.40.50.620">
    <property type="entry name" value="HUPs"/>
    <property type="match status" value="1"/>
</dbReference>
<dbReference type="Gene3D" id="2.40.30.10">
    <property type="entry name" value="Translation factors"/>
    <property type="match status" value="1"/>
</dbReference>
<dbReference type="HAMAP" id="MF_00144">
    <property type="entry name" value="tRNA_thiouridyl_MnmA"/>
    <property type="match status" value="1"/>
</dbReference>
<dbReference type="InterPro" id="IPR004506">
    <property type="entry name" value="MnmA-like"/>
</dbReference>
<dbReference type="InterPro" id="IPR046885">
    <property type="entry name" value="MnmA-like_C"/>
</dbReference>
<dbReference type="InterPro" id="IPR046884">
    <property type="entry name" value="MnmA-like_central"/>
</dbReference>
<dbReference type="InterPro" id="IPR023382">
    <property type="entry name" value="MnmA-like_central_sf"/>
</dbReference>
<dbReference type="InterPro" id="IPR014729">
    <property type="entry name" value="Rossmann-like_a/b/a_fold"/>
</dbReference>
<dbReference type="NCBIfam" id="NF001138">
    <property type="entry name" value="PRK00143.1"/>
    <property type="match status" value="1"/>
</dbReference>
<dbReference type="NCBIfam" id="TIGR00420">
    <property type="entry name" value="trmU"/>
    <property type="match status" value="1"/>
</dbReference>
<dbReference type="PANTHER" id="PTHR11933:SF5">
    <property type="entry name" value="MITOCHONDRIAL TRNA-SPECIFIC 2-THIOURIDYLASE 1"/>
    <property type="match status" value="1"/>
</dbReference>
<dbReference type="PANTHER" id="PTHR11933">
    <property type="entry name" value="TRNA 5-METHYLAMINOMETHYL-2-THIOURIDYLATE -METHYLTRANSFERASE"/>
    <property type="match status" value="1"/>
</dbReference>
<dbReference type="Pfam" id="PF03054">
    <property type="entry name" value="tRNA_Me_trans"/>
    <property type="match status" value="1"/>
</dbReference>
<dbReference type="Pfam" id="PF20258">
    <property type="entry name" value="tRNA_Me_trans_C"/>
    <property type="match status" value="1"/>
</dbReference>
<dbReference type="Pfam" id="PF20259">
    <property type="entry name" value="tRNA_Me_trans_M"/>
    <property type="match status" value="1"/>
</dbReference>
<dbReference type="SUPFAM" id="SSF52402">
    <property type="entry name" value="Adenine nucleotide alpha hydrolases-like"/>
    <property type="match status" value="1"/>
</dbReference>
<protein>
    <recommendedName>
        <fullName evidence="1">tRNA-specific 2-thiouridylase MnmA</fullName>
        <ecNumber evidence="1">2.8.1.13</ecNumber>
    </recommendedName>
</protein>
<evidence type="ECO:0000255" key="1">
    <source>
        <dbReference type="HAMAP-Rule" id="MF_00144"/>
    </source>
</evidence>
<evidence type="ECO:0000305" key="2"/>
<proteinExistence type="inferred from homology"/>
<gene>
    <name evidence="1" type="primary">mnmA</name>
    <name type="ordered locus">BALH_3978</name>
</gene>
<accession>A0RJ05</accession>
<comment type="function">
    <text evidence="1">Catalyzes the 2-thiolation of uridine at the wobble position (U34) of tRNA, leading to the formation of s(2)U34.</text>
</comment>
<comment type="catalytic activity">
    <reaction evidence="1">
        <text>S-sulfanyl-L-cysteinyl-[protein] + uridine(34) in tRNA + AH2 + ATP = 2-thiouridine(34) in tRNA + L-cysteinyl-[protein] + A + AMP + diphosphate + H(+)</text>
        <dbReference type="Rhea" id="RHEA:47032"/>
        <dbReference type="Rhea" id="RHEA-COMP:10131"/>
        <dbReference type="Rhea" id="RHEA-COMP:11726"/>
        <dbReference type="Rhea" id="RHEA-COMP:11727"/>
        <dbReference type="Rhea" id="RHEA-COMP:11728"/>
        <dbReference type="ChEBI" id="CHEBI:13193"/>
        <dbReference type="ChEBI" id="CHEBI:15378"/>
        <dbReference type="ChEBI" id="CHEBI:17499"/>
        <dbReference type="ChEBI" id="CHEBI:29950"/>
        <dbReference type="ChEBI" id="CHEBI:30616"/>
        <dbReference type="ChEBI" id="CHEBI:33019"/>
        <dbReference type="ChEBI" id="CHEBI:61963"/>
        <dbReference type="ChEBI" id="CHEBI:65315"/>
        <dbReference type="ChEBI" id="CHEBI:87170"/>
        <dbReference type="ChEBI" id="CHEBI:456215"/>
        <dbReference type="EC" id="2.8.1.13"/>
    </reaction>
</comment>
<comment type="subcellular location">
    <subcellularLocation>
        <location evidence="1">Cytoplasm</location>
    </subcellularLocation>
</comment>
<comment type="similarity">
    <text evidence="1">Belongs to the MnmA/TRMU family.</text>
</comment>
<comment type="sequence caution" evidence="2">
    <conflict type="erroneous initiation">
        <sequence resource="EMBL-CDS" id="ABK87198"/>
    </conflict>
</comment>
<organism>
    <name type="scientific">Bacillus thuringiensis (strain Al Hakam)</name>
    <dbReference type="NCBI Taxonomy" id="412694"/>
    <lineage>
        <taxon>Bacteria</taxon>
        <taxon>Bacillati</taxon>
        <taxon>Bacillota</taxon>
        <taxon>Bacilli</taxon>
        <taxon>Bacillales</taxon>
        <taxon>Bacillaceae</taxon>
        <taxon>Bacillus</taxon>
        <taxon>Bacillus cereus group</taxon>
    </lineage>
</organism>
<sequence length="371" mass="41718">MNKLPHETRVVIGMSGGVDSSVAALLLKEQGYDVIGIFMKNWDDTDENGVCTATEDYNDVIEVCNQIGIPYYAVNFEKQYWDKVFTYFLDEYRAGRTPNPDVMCNKEIKFKAFLEHAIALGADYVATGHYARVAYMDGEYKMLRGVDDNKDQTYFLNQLSQEQLSKTMFPLGELKKPQIREMAKEAGLATAAKKDSTGICFIGERNFKDFLSNYLPAQPGVMQTLSGEVKGKHDGLMYYTIGQRHGLGIGGNGDPWFAVGKNLKENILYVDQGFHNELLYGDEVIATNVGWVSNEAKEKEFKCTAKFRYRQEDNKVTVQIVDENTVRILCDEPIRAITPGQAVVFYDGDECLGGATIDEVYRSGKKLDYLG</sequence>
<reference key="1">
    <citation type="journal article" date="2007" name="J. Bacteriol.">
        <title>The complete genome sequence of Bacillus thuringiensis Al Hakam.</title>
        <authorList>
            <person name="Challacombe J.F."/>
            <person name="Altherr M.R."/>
            <person name="Xie G."/>
            <person name="Bhotika S.S."/>
            <person name="Brown N."/>
            <person name="Bruce D."/>
            <person name="Campbell C.S."/>
            <person name="Campbell M.L."/>
            <person name="Chen J."/>
            <person name="Chertkov O."/>
            <person name="Cleland C."/>
            <person name="Dimitrijevic M."/>
            <person name="Doggett N.A."/>
            <person name="Fawcett J.J."/>
            <person name="Glavina T."/>
            <person name="Goodwin L.A."/>
            <person name="Green L.D."/>
            <person name="Han C.S."/>
            <person name="Hill K.K."/>
            <person name="Hitchcock P."/>
            <person name="Jackson P.J."/>
            <person name="Keim P."/>
            <person name="Kewalramani A.R."/>
            <person name="Longmire J."/>
            <person name="Lucas S."/>
            <person name="Malfatti S."/>
            <person name="Martinez D."/>
            <person name="McMurry K."/>
            <person name="Meincke L.J."/>
            <person name="Misra M."/>
            <person name="Moseman B.L."/>
            <person name="Mundt M."/>
            <person name="Munk A.C."/>
            <person name="Okinaka R.T."/>
            <person name="Parson-Quintana B."/>
            <person name="Reilly L.P."/>
            <person name="Richardson P."/>
            <person name="Robinson D.L."/>
            <person name="Saunders E."/>
            <person name="Tapia R."/>
            <person name="Tesmer J.G."/>
            <person name="Thayer N."/>
            <person name="Thompson L.S."/>
            <person name="Tice H."/>
            <person name="Ticknor L.O."/>
            <person name="Wills P.L."/>
            <person name="Gilna P."/>
            <person name="Brettin T.S."/>
        </authorList>
    </citation>
    <scope>NUCLEOTIDE SEQUENCE [LARGE SCALE GENOMIC DNA]</scope>
    <source>
        <strain>Al Hakam</strain>
    </source>
</reference>
<name>MNMA_BACAH</name>
<feature type="chain" id="PRO_0000349519" description="tRNA-specific 2-thiouridylase MnmA">
    <location>
        <begin position="1"/>
        <end position="371"/>
    </location>
</feature>
<feature type="region of interest" description="Interaction with target base in tRNA" evidence="1">
    <location>
        <begin position="99"/>
        <end position="101"/>
    </location>
</feature>
<feature type="region of interest" description="Interaction with tRNA" evidence="1">
    <location>
        <begin position="150"/>
        <end position="152"/>
    </location>
</feature>
<feature type="region of interest" description="Interaction with tRNA" evidence="1">
    <location>
        <begin position="308"/>
        <end position="309"/>
    </location>
</feature>
<feature type="active site" description="Nucleophile" evidence="1">
    <location>
        <position position="104"/>
    </location>
</feature>
<feature type="active site" description="Cysteine persulfide intermediate" evidence="1">
    <location>
        <position position="200"/>
    </location>
</feature>
<feature type="binding site" evidence="1">
    <location>
        <begin position="13"/>
        <end position="20"/>
    </location>
    <ligand>
        <name>ATP</name>
        <dbReference type="ChEBI" id="CHEBI:30616"/>
    </ligand>
</feature>
<feature type="binding site" evidence="1">
    <location>
        <position position="39"/>
    </location>
    <ligand>
        <name>ATP</name>
        <dbReference type="ChEBI" id="CHEBI:30616"/>
    </ligand>
</feature>
<feature type="binding site" evidence="1">
    <location>
        <position position="128"/>
    </location>
    <ligand>
        <name>ATP</name>
        <dbReference type="ChEBI" id="CHEBI:30616"/>
    </ligand>
</feature>
<feature type="site" description="Interaction with tRNA" evidence="1">
    <location>
        <position position="129"/>
    </location>
</feature>
<feature type="site" description="Interaction with tRNA" evidence="1">
    <location>
        <position position="341"/>
    </location>
</feature>
<feature type="disulfide bond" description="Alternate" evidence="1">
    <location>
        <begin position="104"/>
        <end position="200"/>
    </location>
</feature>